<protein>
    <recommendedName>
        <fullName evidence="1">Probable potassium transport system protein Kup 1</fullName>
    </recommendedName>
</protein>
<keyword id="KW-0997">Cell inner membrane</keyword>
<keyword id="KW-1003">Cell membrane</keyword>
<keyword id="KW-0406">Ion transport</keyword>
<keyword id="KW-0472">Membrane</keyword>
<keyword id="KW-0630">Potassium</keyword>
<keyword id="KW-0633">Potassium transport</keyword>
<keyword id="KW-0769">Symport</keyword>
<keyword id="KW-0812">Transmembrane</keyword>
<keyword id="KW-1133">Transmembrane helix</keyword>
<keyword id="KW-0813">Transport</keyword>
<proteinExistence type="inferred from homology"/>
<accession>Q6N5F2</accession>
<reference key="1">
    <citation type="journal article" date="2004" name="Nat. Biotechnol.">
        <title>Complete genome sequence of the metabolically versatile photosynthetic bacterium Rhodopseudomonas palustris.</title>
        <authorList>
            <person name="Larimer F.W."/>
            <person name="Chain P."/>
            <person name="Hauser L."/>
            <person name="Lamerdin J.E."/>
            <person name="Malfatti S."/>
            <person name="Do L."/>
            <person name="Land M.L."/>
            <person name="Pelletier D.A."/>
            <person name="Beatty J.T."/>
            <person name="Lang A.S."/>
            <person name="Tabita F.R."/>
            <person name="Gibson J.L."/>
            <person name="Hanson T.E."/>
            <person name="Bobst C."/>
            <person name="Torres y Torres J.L."/>
            <person name="Peres C."/>
            <person name="Harrison F.H."/>
            <person name="Gibson J."/>
            <person name="Harwood C.S."/>
        </authorList>
    </citation>
    <scope>NUCLEOTIDE SEQUENCE [LARGE SCALE GENOMIC DNA]</scope>
    <source>
        <strain>ATCC BAA-98 / CGA009</strain>
    </source>
</reference>
<name>KUP1_RHOPA</name>
<feature type="chain" id="PRO_0000209051" description="Probable potassium transport system protein Kup 1">
    <location>
        <begin position="1"/>
        <end position="620"/>
    </location>
</feature>
<feature type="transmembrane region" description="Helical" evidence="1">
    <location>
        <begin position="7"/>
        <end position="27"/>
    </location>
</feature>
<feature type="transmembrane region" description="Helical" evidence="1">
    <location>
        <begin position="50"/>
        <end position="70"/>
    </location>
</feature>
<feature type="transmembrane region" description="Helical" evidence="1">
    <location>
        <begin position="102"/>
        <end position="122"/>
    </location>
</feature>
<feature type="transmembrane region" description="Helical" evidence="1">
    <location>
        <begin position="136"/>
        <end position="156"/>
    </location>
</feature>
<feature type="transmembrane region" description="Helical" evidence="1">
    <location>
        <begin position="168"/>
        <end position="188"/>
    </location>
</feature>
<feature type="transmembrane region" description="Helical" evidence="1">
    <location>
        <begin position="211"/>
        <end position="231"/>
    </location>
</feature>
<feature type="transmembrane region" description="Helical" evidence="1">
    <location>
        <begin position="246"/>
        <end position="266"/>
    </location>
</feature>
<feature type="transmembrane region" description="Helical" evidence="1">
    <location>
        <begin position="284"/>
        <end position="304"/>
    </location>
</feature>
<feature type="transmembrane region" description="Helical" evidence="1">
    <location>
        <begin position="336"/>
        <end position="356"/>
    </location>
</feature>
<feature type="transmembrane region" description="Helical" evidence="1">
    <location>
        <begin position="368"/>
        <end position="388"/>
    </location>
</feature>
<feature type="transmembrane region" description="Helical" evidence="1">
    <location>
        <begin position="393"/>
        <end position="413"/>
    </location>
</feature>
<feature type="transmembrane region" description="Helical" evidence="1">
    <location>
        <begin position="415"/>
        <end position="435"/>
    </location>
</feature>
<evidence type="ECO:0000255" key="1">
    <source>
        <dbReference type="HAMAP-Rule" id="MF_01522"/>
    </source>
</evidence>
<organism>
    <name type="scientific">Rhodopseudomonas palustris (strain ATCC BAA-98 / CGA009)</name>
    <dbReference type="NCBI Taxonomy" id="258594"/>
    <lineage>
        <taxon>Bacteria</taxon>
        <taxon>Pseudomonadati</taxon>
        <taxon>Pseudomonadota</taxon>
        <taxon>Alphaproteobacteria</taxon>
        <taxon>Hyphomicrobiales</taxon>
        <taxon>Nitrobacteraceae</taxon>
        <taxon>Rhodopseudomonas</taxon>
    </lineage>
</organism>
<comment type="function">
    <text evidence="1">Transport of potassium into the cell. Likely operates as a K(+):H(+) symporter.</text>
</comment>
<comment type="catalytic activity">
    <reaction evidence="1">
        <text>K(+)(in) + H(+)(in) = K(+)(out) + H(+)(out)</text>
        <dbReference type="Rhea" id="RHEA:28490"/>
        <dbReference type="ChEBI" id="CHEBI:15378"/>
        <dbReference type="ChEBI" id="CHEBI:29103"/>
    </reaction>
    <physiologicalReaction direction="right-to-left" evidence="1">
        <dbReference type="Rhea" id="RHEA:28492"/>
    </physiologicalReaction>
</comment>
<comment type="subcellular location">
    <subcellularLocation>
        <location evidence="1">Cell inner membrane</location>
        <topology evidence="1">Multi-pass membrane protein</topology>
    </subcellularLocation>
</comment>
<comment type="similarity">
    <text evidence="1">Belongs to the HAK/KUP transporter (TC 2.A.72) family.</text>
</comment>
<dbReference type="EMBL" id="BX572602">
    <property type="protein sequence ID" value="CAE28468.1"/>
    <property type="molecule type" value="Genomic_DNA"/>
</dbReference>
<dbReference type="RefSeq" id="WP_011158573.1">
    <property type="nucleotide sequence ID" value="NZ_CP116810.1"/>
</dbReference>
<dbReference type="STRING" id="258594.RPA3027"/>
<dbReference type="GeneID" id="66894110"/>
<dbReference type="eggNOG" id="COG3158">
    <property type="taxonomic scope" value="Bacteria"/>
</dbReference>
<dbReference type="HOGENOM" id="CLU_008142_4_2_5"/>
<dbReference type="PhylomeDB" id="Q6N5F2"/>
<dbReference type="GO" id="GO:0005886">
    <property type="term" value="C:plasma membrane"/>
    <property type="evidence" value="ECO:0007669"/>
    <property type="project" value="UniProtKB-SubCell"/>
</dbReference>
<dbReference type="GO" id="GO:0015079">
    <property type="term" value="F:potassium ion transmembrane transporter activity"/>
    <property type="evidence" value="ECO:0007669"/>
    <property type="project" value="UniProtKB-UniRule"/>
</dbReference>
<dbReference type="GO" id="GO:0015293">
    <property type="term" value="F:symporter activity"/>
    <property type="evidence" value="ECO:0007669"/>
    <property type="project" value="UniProtKB-UniRule"/>
</dbReference>
<dbReference type="HAMAP" id="MF_01522">
    <property type="entry name" value="Kup"/>
    <property type="match status" value="1"/>
</dbReference>
<dbReference type="InterPro" id="IPR003855">
    <property type="entry name" value="K+_transporter"/>
</dbReference>
<dbReference type="InterPro" id="IPR053952">
    <property type="entry name" value="K_trans_C"/>
</dbReference>
<dbReference type="InterPro" id="IPR053951">
    <property type="entry name" value="K_trans_N"/>
</dbReference>
<dbReference type="InterPro" id="IPR023051">
    <property type="entry name" value="Kup"/>
</dbReference>
<dbReference type="PANTHER" id="PTHR30540:SF79">
    <property type="entry name" value="LOW AFFINITY POTASSIUM TRANSPORT SYSTEM PROTEIN KUP"/>
    <property type="match status" value="1"/>
</dbReference>
<dbReference type="PANTHER" id="PTHR30540">
    <property type="entry name" value="OSMOTIC STRESS POTASSIUM TRANSPORTER"/>
    <property type="match status" value="1"/>
</dbReference>
<dbReference type="Pfam" id="PF02705">
    <property type="entry name" value="K_trans"/>
    <property type="match status" value="1"/>
</dbReference>
<dbReference type="Pfam" id="PF22776">
    <property type="entry name" value="K_trans_C"/>
    <property type="match status" value="1"/>
</dbReference>
<sequence length="620" mass="67621">MSQQKKGIGLLVSAIGVVFGDIGTSPLYALKETFAGHHPIPVTPDNIFGVLSLVFWTVMLLVTVKYVIVIMRADNHGEGGSLALLALVTELTRGRRVHYPLMMLGVIAAALFYGDSMITPAISVLSAVEGLEVVTPDLKAYVVPITAVVLTLLFAIQSRGTGLVGRLFGPVMCMWFLTLALLGIANIVHAPEVLEAISPTFAIEFVFRHPLMSFYALGSVVLAVTGGEALYTDMGHFGRFPIRLAWFGLVLPALLLNYFGQGALLIHDPSAIQNPFFRLGPEWMVVPMVALATLATVIASQAVISGAYSVARQAIQLGLLPRMTIVHTSGEEAGQIYVPFTNWTLYFAVMALVVGFQSSSNLAAAYGIAVTGTMMIDTILVSFVAALLWRWHPVVVAVVIGTLLLLDFAFFAANIIKVAQGGWFPLFIGFISFTVLTTWRRGRALVRKQLKKQAVPLDVVLRALGPNVSRARGTAVFLTAATDGVPPALLHNLKHNQTVHQRVILTTVSTAETPYVPDSERVHMTDIGDGFHRLIIRYGFMQTPDVPAALSLCKQFGHEFNMMSTSFFLSRETYVPSLNPGMALWRERLFTFMTLNATRATTFFKIPTDRVVELGTQLEI</sequence>
<gene>
    <name evidence="1" type="primary">kup1</name>
    <name type="ordered locus">RPA3027</name>
</gene>